<reference evidence="5" key="1">
    <citation type="journal article" date="2006" name="J. Allergy Clin. Immunol.">
        <title>Bla g 6: a troponin C allergen from Blattella germanica with IgE binding calcium dependence.</title>
        <authorList>
            <person name="Hindley J."/>
            <person name="Wunschmann S."/>
            <person name="Satinover S.M."/>
            <person name="Woodfolk J.A."/>
            <person name="Chew F.T."/>
            <person name="Chapman M.D."/>
            <person name="Pomes A."/>
        </authorList>
    </citation>
    <scope>NUCLEOTIDE SEQUENCE [MRNA]</scope>
    <scope>3D-STRUCTURE MODELING</scope>
    <scope>ALLERGEN</scope>
</reference>
<sequence length="151" mass="17216">MDELPPEQIQLLKKAFDAFDREKKGCISTEMVGTILEMLGHRLDDDMLQEIIAEVDADGSGELEFEEFVSLASRFLVEEDAEAMQQELREAFRLYDKEGNGYITTNVLREILKELDDKITAEDLDMMIEEIDSDGSGTVDFDEFMEVMTGE</sequence>
<comment type="function">
    <text evidence="4">Troponin is the central regulatory protein of striated muscle contraction. It consists of three components: Troponin-I (Tn-I) which is the inhibitor of actomyosin ATPase, Troponin-T (Tn-T) which contains the binding site for tropomyosin and Troponin-C (Tn-C). The binding of calcium to Tn-C abolishes the inhibitory action of Tn on actin filaments.</text>
</comment>
<comment type="allergen">
    <text evidence="2">Causes an allergic reaction in human. Binds to IgE of patients allergic to cockroach. Binds to IgE in 86% of the 7 sera tested that also bind Bla g 6.0201 isoallergen. Calcium depletion by 10 mM ethylene glycol bis(2-aminoethyl)tetraacetic acid (EGTA) does not significantly affect IgE-binding, but addition of 10 mM CaCl(2) after calcium depletion increases IgE-binding by approximately 2-fold.</text>
</comment>
<comment type="similarity">
    <text evidence="4">Belongs to the troponin C family.</text>
</comment>
<accession>Q1A7B3</accession>
<organism evidence="5">
    <name type="scientific">Blattella germanica</name>
    <name type="common">German cockroach</name>
    <name type="synonym">Blatta germanica</name>
    <dbReference type="NCBI Taxonomy" id="6973"/>
    <lineage>
        <taxon>Eukaryota</taxon>
        <taxon>Metazoa</taxon>
        <taxon>Ecdysozoa</taxon>
        <taxon>Arthropoda</taxon>
        <taxon>Hexapoda</taxon>
        <taxon>Insecta</taxon>
        <taxon>Pterygota</taxon>
        <taxon>Neoptera</taxon>
        <taxon>Polyneoptera</taxon>
        <taxon>Dictyoptera</taxon>
        <taxon>Blattodea</taxon>
        <taxon>Blaberoidea</taxon>
        <taxon>Blattellidae</taxon>
        <taxon>Blattella</taxon>
    </lineage>
</organism>
<keyword id="KW-0020">Allergen</keyword>
<keyword id="KW-0106">Calcium</keyword>
<keyword id="KW-0479">Metal-binding</keyword>
<keyword id="KW-0514">Muscle protein</keyword>
<keyword id="KW-0677">Repeat</keyword>
<evidence type="ECO:0000255" key="1">
    <source>
        <dbReference type="PROSITE-ProRule" id="PRU00448"/>
    </source>
</evidence>
<evidence type="ECO:0000269" key="2">
    <source>
    </source>
</evidence>
<evidence type="ECO:0000303" key="3">
    <source>
    </source>
</evidence>
<evidence type="ECO:0000305" key="4"/>
<evidence type="ECO:0000312" key="5">
    <source>
        <dbReference type="EMBL" id="ABB89296.1"/>
    </source>
</evidence>
<protein>
    <recommendedName>
        <fullName evidence="3">Troponin C, isoallergen Bla g 6.0101</fullName>
        <shortName>NACP</shortName>
    </recommendedName>
    <allergenName evidence="3">Bla g 6.0101</allergenName>
</protein>
<dbReference type="EMBL" id="DQ279092">
    <property type="protein sequence ID" value="ABB89296.1"/>
    <property type="molecule type" value="mRNA"/>
</dbReference>
<dbReference type="SMR" id="Q1A7B3"/>
<dbReference type="Allergome" id="145">
    <property type="allergen name" value="Bla g 6"/>
</dbReference>
<dbReference type="Allergome" id="2865">
    <property type="allergen name" value="Bla g 6.0101"/>
</dbReference>
<dbReference type="GO" id="GO:0016460">
    <property type="term" value="C:myosin II complex"/>
    <property type="evidence" value="ECO:0007669"/>
    <property type="project" value="TreeGrafter"/>
</dbReference>
<dbReference type="GO" id="GO:0005509">
    <property type="term" value="F:calcium ion binding"/>
    <property type="evidence" value="ECO:0007669"/>
    <property type="project" value="InterPro"/>
</dbReference>
<dbReference type="CDD" id="cd00051">
    <property type="entry name" value="EFh"/>
    <property type="match status" value="1"/>
</dbReference>
<dbReference type="FunFam" id="1.10.238.10:FF:000336">
    <property type="entry name" value="HLH domain-containing protein"/>
    <property type="match status" value="1"/>
</dbReference>
<dbReference type="FunFam" id="1.10.238.10:FF:000103">
    <property type="entry name" value="Troponin C Ib"/>
    <property type="match status" value="1"/>
</dbReference>
<dbReference type="Gene3D" id="1.10.238.10">
    <property type="entry name" value="EF-hand"/>
    <property type="match status" value="2"/>
</dbReference>
<dbReference type="InterPro" id="IPR050230">
    <property type="entry name" value="CALM/Myosin/TropC-like"/>
</dbReference>
<dbReference type="InterPro" id="IPR011992">
    <property type="entry name" value="EF-hand-dom_pair"/>
</dbReference>
<dbReference type="InterPro" id="IPR018247">
    <property type="entry name" value="EF_Hand_1_Ca_BS"/>
</dbReference>
<dbReference type="InterPro" id="IPR002048">
    <property type="entry name" value="EF_hand_dom"/>
</dbReference>
<dbReference type="PANTHER" id="PTHR23048:SF0">
    <property type="entry name" value="CALMODULIN LIKE 3"/>
    <property type="match status" value="1"/>
</dbReference>
<dbReference type="PANTHER" id="PTHR23048">
    <property type="entry name" value="MYOSIN LIGHT CHAIN 1, 3"/>
    <property type="match status" value="1"/>
</dbReference>
<dbReference type="Pfam" id="PF13499">
    <property type="entry name" value="EF-hand_7"/>
    <property type="match status" value="2"/>
</dbReference>
<dbReference type="SMART" id="SM00054">
    <property type="entry name" value="EFh"/>
    <property type="match status" value="4"/>
</dbReference>
<dbReference type="SUPFAM" id="SSF47473">
    <property type="entry name" value="EF-hand"/>
    <property type="match status" value="1"/>
</dbReference>
<dbReference type="PROSITE" id="PS00018">
    <property type="entry name" value="EF_HAND_1"/>
    <property type="match status" value="2"/>
</dbReference>
<dbReference type="PROSITE" id="PS50222">
    <property type="entry name" value="EF_HAND_2"/>
    <property type="match status" value="4"/>
</dbReference>
<name>TNNC1_BLAGE</name>
<feature type="chain" id="PRO_0000447466" description="Troponin C, isoallergen Bla g 6.0101">
    <location>
        <begin position="1"/>
        <end position="151"/>
    </location>
</feature>
<feature type="domain" description="EF-hand 1" evidence="1">
    <location>
        <begin position="7"/>
        <end position="42"/>
    </location>
</feature>
<feature type="domain" description="EF-hand 2" evidence="1">
    <location>
        <begin position="43"/>
        <end position="78"/>
    </location>
</feature>
<feature type="domain" description="EF-hand 3" evidence="1">
    <location>
        <begin position="83"/>
        <end position="118"/>
    </location>
</feature>
<feature type="domain" description="EF-hand 4" evidence="1">
    <location>
        <begin position="119"/>
        <end position="151"/>
    </location>
</feature>
<feature type="binding site" evidence="1">
    <location>
        <position position="56"/>
    </location>
    <ligand>
        <name>Ca(2+)</name>
        <dbReference type="ChEBI" id="CHEBI:29108"/>
        <label>1</label>
    </ligand>
</feature>
<feature type="binding site" evidence="1">
    <location>
        <position position="58"/>
    </location>
    <ligand>
        <name>Ca(2+)</name>
        <dbReference type="ChEBI" id="CHEBI:29108"/>
        <label>1</label>
    </ligand>
</feature>
<feature type="binding site" evidence="1">
    <location>
        <position position="60"/>
    </location>
    <ligand>
        <name>Ca(2+)</name>
        <dbReference type="ChEBI" id="CHEBI:29108"/>
        <label>1</label>
    </ligand>
</feature>
<feature type="binding site" evidence="1">
    <location>
        <position position="62"/>
    </location>
    <ligand>
        <name>Ca(2+)</name>
        <dbReference type="ChEBI" id="CHEBI:29108"/>
        <label>1</label>
    </ligand>
</feature>
<feature type="binding site" evidence="1">
    <location>
        <position position="67"/>
    </location>
    <ligand>
        <name>Ca(2+)</name>
        <dbReference type="ChEBI" id="CHEBI:29108"/>
        <label>1</label>
    </ligand>
</feature>
<feature type="binding site" evidence="1">
    <location>
        <position position="132"/>
    </location>
    <ligand>
        <name>Ca(2+)</name>
        <dbReference type="ChEBI" id="CHEBI:29108"/>
        <label>2</label>
    </ligand>
</feature>
<feature type="binding site" evidence="1">
    <location>
        <position position="134"/>
    </location>
    <ligand>
        <name>Ca(2+)</name>
        <dbReference type="ChEBI" id="CHEBI:29108"/>
        <label>2</label>
    </ligand>
</feature>
<feature type="binding site" evidence="1">
    <location>
        <position position="136"/>
    </location>
    <ligand>
        <name>Ca(2+)</name>
        <dbReference type="ChEBI" id="CHEBI:29108"/>
        <label>2</label>
    </ligand>
</feature>
<feature type="binding site" evidence="1">
    <location>
        <position position="138"/>
    </location>
    <ligand>
        <name>Ca(2+)</name>
        <dbReference type="ChEBI" id="CHEBI:29108"/>
        <label>2</label>
    </ligand>
</feature>
<feature type="binding site" evidence="1">
    <location>
        <position position="143"/>
    </location>
    <ligand>
        <name>Ca(2+)</name>
        <dbReference type="ChEBI" id="CHEBI:29108"/>
        <label>2</label>
    </ligand>
</feature>
<proteinExistence type="evidence at protein level"/>